<name>MNMA_CAMLR</name>
<comment type="function">
    <text evidence="1">Catalyzes the 2-thiolation of uridine at the wobble position (U34) of tRNA, leading to the formation of s(2)U34.</text>
</comment>
<comment type="catalytic activity">
    <reaction evidence="1">
        <text>S-sulfanyl-L-cysteinyl-[protein] + uridine(34) in tRNA + AH2 + ATP = 2-thiouridine(34) in tRNA + L-cysteinyl-[protein] + A + AMP + diphosphate + H(+)</text>
        <dbReference type="Rhea" id="RHEA:47032"/>
        <dbReference type="Rhea" id="RHEA-COMP:10131"/>
        <dbReference type="Rhea" id="RHEA-COMP:11726"/>
        <dbReference type="Rhea" id="RHEA-COMP:11727"/>
        <dbReference type="Rhea" id="RHEA-COMP:11728"/>
        <dbReference type="ChEBI" id="CHEBI:13193"/>
        <dbReference type="ChEBI" id="CHEBI:15378"/>
        <dbReference type="ChEBI" id="CHEBI:17499"/>
        <dbReference type="ChEBI" id="CHEBI:29950"/>
        <dbReference type="ChEBI" id="CHEBI:30616"/>
        <dbReference type="ChEBI" id="CHEBI:33019"/>
        <dbReference type="ChEBI" id="CHEBI:61963"/>
        <dbReference type="ChEBI" id="CHEBI:65315"/>
        <dbReference type="ChEBI" id="CHEBI:87170"/>
        <dbReference type="ChEBI" id="CHEBI:456215"/>
        <dbReference type="EC" id="2.8.1.13"/>
    </reaction>
</comment>
<comment type="subcellular location">
    <subcellularLocation>
        <location evidence="1">Cytoplasm</location>
    </subcellularLocation>
</comment>
<comment type="similarity">
    <text evidence="1">Belongs to the MnmA/TRMU family.</text>
</comment>
<sequence length="338" mass="38427">MKILVAMSGGVDSTVTAYKLKQAGHEIIGCYMKLHGKPNYHEENIQKVEKVANFLGIKYHILDLQEDFKNQVYMPFINTYKDGKTPNPCALCNRFIKLGKLLEFAKSLGCEKLATGHYARIENGLIKTAFDDSKDQSYFLANADKEALEYLIFPLGEMKKEDVKKFASTIEVLKSFATQKESSEICFVEDTYVQVLDQFMDTKIPGIVRDSSGKEVGKHEGYMHYTIGKRRGFEVRGAHEPHFVLKIDPKKNEIIVGKKEELKINEFDLEKINLFIDAKELDCEVKIRYRSRSTPCKVMINDDKSAKVILKEPVYGLASGQMAVFYDKDLVLASGFIN</sequence>
<accession>B9KEW8</accession>
<proteinExistence type="inferred from homology"/>
<dbReference type="EC" id="2.8.1.13" evidence="1"/>
<dbReference type="EMBL" id="CP000932">
    <property type="protein sequence ID" value="ACM63603.1"/>
    <property type="molecule type" value="Genomic_DNA"/>
</dbReference>
<dbReference type="RefSeq" id="WP_012660987.1">
    <property type="nucleotide sequence ID" value="NC_012039.1"/>
</dbReference>
<dbReference type="SMR" id="B9KEW8"/>
<dbReference type="STRING" id="306263.Cla_0240"/>
<dbReference type="KEGG" id="cla:CLA_0240"/>
<dbReference type="PATRIC" id="fig|306263.5.peg.238"/>
<dbReference type="eggNOG" id="COG0482">
    <property type="taxonomic scope" value="Bacteria"/>
</dbReference>
<dbReference type="HOGENOM" id="CLU_035188_0_0_7"/>
<dbReference type="Proteomes" id="UP000007727">
    <property type="component" value="Chromosome"/>
</dbReference>
<dbReference type="GO" id="GO:0005737">
    <property type="term" value="C:cytoplasm"/>
    <property type="evidence" value="ECO:0007669"/>
    <property type="project" value="UniProtKB-SubCell"/>
</dbReference>
<dbReference type="GO" id="GO:0005524">
    <property type="term" value="F:ATP binding"/>
    <property type="evidence" value="ECO:0007669"/>
    <property type="project" value="UniProtKB-KW"/>
</dbReference>
<dbReference type="GO" id="GO:0000049">
    <property type="term" value="F:tRNA binding"/>
    <property type="evidence" value="ECO:0007669"/>
    <property type="project" value="UniProtKB-KW"/>
</dbReference>
<dbReference type="GO" id="GO:0103016">
    <property type="term" value="F:tRNA-uridine 2-sulfurtransferase activity"/>
    <property type="evidence" value="ECO:0007669"/>
    <property type="project" value="UniProtKB-EC"/>
</dbReference>
<dbReference type="GO" id="GO:0002143">
    <property type="term" value="P:tRNA wobble position uridine thiolation"/>
    <property type="evidence" value="ECO:0007669"/>
    <property type="project" value="TreeGrafter"/>
</dbReference>
<dbReference type="CDD" id="cd01998">
    <property type="entry name" value="MnmA_TRMU-like"/>
    <property type="match status" value="1"/>
</dbReference>
<dbReference type="FunFam" id="2.30.30.280:FF:000001">
    <property type="entry name" value="tRNA-specific 2-thiouridylase MnmA"/>
    <property type="match status" value="1"/>
</dbReference>
<dbReference type="Gene3D" id="2.30.30.280">
    <property type="entry name" value="Adenine nucleotide alpha hydrolases-like domains"/>
    <property type="match status" value="1"/>
</dbReference>
<dbReference type="Gene3D" id="3.40.50.620">
    <property type="entry name" value="HUPs"/>
    <property type="match status" value="1"/>
</dbReference>
<dbReference type="Gene3D" id="2.40.30.10">
    <property type="entry name" value="Translation factors"/>
    <property type="match status" value="1"/>
</dbReference>
<dbReference type="HAMAP" id="MF_00144">
    <property type="entry name" value="tRNA_thiouridyl_MnmA"/>
    <property type="match status" value="1"/>
</dbReference>
<dbReference type="InterPro" id="IPR004506">
    <property type="entry name" value="MnmA-like"/>
</dbReference>
<dbReference type="InterPro" id="IPR046885">
    <property type="entry name" value="MnmA-like_C"/>
</dbReference>
<dbReference type="InterPro" id="IPR046884">
    <property type="entry name" value="MnmA-like_central"/>
</dbReference>
<dbReference type="InterPro" id="IPR023382">
    <property type="entry name" value="MnmA-like_central_sf"/>
</dbReference>
<dbReference type="InterPro" id="IPR014729">
    <property type="entry name" value="Rossmann-like_a/b/a_fold"/>
</dbReference>
<dbReference type="NCBIfam" id="NF001138">
    <property type="entry name" value="PRK00143.1"/>
    <property type="match status" value="1"/>
</dbReference>
<dbReference type="NCBIfam" id="TIGR00420">
    <property type="entry name" value="trmU"/>
    <property type="match status" value="1"/>
</dbReference>
<dbReference type="PANTHER" id="PTHR11933:SF5">
    <property type="entry name" value="MITOCHONDRIAL TRNA-SPECIFIC 2-THIOURIDYLASE 1"/>
    <property type="match status" value="1"/>
</dbReference>
<dbReference type="PANTHER" id="PTHR11933">
    <property type="entry name" value="TRNA 5-METHYLAMINOMETHYL-2-THIOURIDYLATE -METHYLTRANSFERASE"/>
    <property type="match status" value="1"/>
</dbReference>
<dbReference type="Pfam" id="PF03054">
    <property type="entry name" value="tRNA_Me_trans"/>
    <property type="match status" value="1"/>
</dbReference>
<dbReference type="Pfam" id="PF20258">
    <property type="entry name" value="tRNA_Me_trans_C"/>
    <property type="match status" value="1"/>
</dbReference>
<dbReference type="Pfam" id="PF20259">
    <property type="entry name" value="tRNA_Me_trans_M"/>
    <property type="match status" value="1"/>
</dbReference>
<dbReference type="SUPFAM" id="SSF52402">
    <property type="entry name" value="Adenine nucleotide alpha hydrolases-like"/>
    <property type="match status" value="1"/>
</dbReference>
<gene>
    <name evidence="1" type="primary">mnmA</name>
    <name type="ordered locus">Cla_0240</name>
</gene>
<reference key="1">
    <citation type="journal article" date="2008" name="Foodborne Pathog. Dis.">
        <title>The complete genome sequence and analysis of the human pathogen Campylobacter lari.</title>
        <authorList>
            <person name="Miller W.G."/>
            <person name="Wang G."/>
            <person name="Binnewies T.T."/>
            <person name="Parker C.T."/>
        </authorList>
    </citation>
    <scope>NUCLEOTIDE SEQUENCE [LARGE SCALE GENOMIC DNA]</scope>
    <source>
        <strain>RM2100 / D67 / ATCC BAA-1060</strain>
    </source>
</reference>
<feature type="chain" id="PRO_1000198604" description="tRNA-specific 2-thiouridylase MnmA">
    <location>
        <begin position="1"/>
        <end position="338"/>
    </location>
</feature>
<feature type="region of interest" description="Interaction with tRNA" evidence="1">
    <location>
        <begin position="134"/>
        <end position="136"/>
    </location>
</feature>
<feature type="region of interest" description="Interaction with tRNA" evidence="1">
    <location>
        <begin position="288"/>
        <end position="289"/>
    </location>
</feature>
<feature type="active site" description="Nucleophile" evidence="1">
    <location>
        <position position="92"/>
    </location>
</feature>
<feature type="active site" description="Cysteine persulfide intermediate" evidence="1">
    <location>
        <position position="186"/>
    </location>
</feature>
<feature type="binding site" evidence="1">
    <location>
        <begin position="6"/>
        <end position="13"/>
    </location>
    <ligand>
        <name>ATP</name>
        <dbReference type="ChEBI" id="CHEBI:30616"/>
    </ligand>
</feature>
<feature type="binding site" evidence="1">
    <location>
        <position position="32"/>
    </location>
    <ligand>
        <name>ATP</name>
        <dbReference type="ChEBI" id="CHEBI:30616"/>
    </ligand>
</feature>
<feature type="binding site" evidence="1">
    <location>
        <position position="116"/>
    </location>
    <ligand>
        <name>ATP</name>
        <dbReference type="ChEBI" id="CHEBI:30616"/>
    </ligand>
</feature>
<feature type="site" description="Interaction with tRNA" evidence="1">
    <location>
        <position position="117"/>
    </location>
</feature>
<feature type="site" description="Interaction with tRNA" evidence="1">
    <location>
        <position position="321"/>
    </location>
</feature>
<feature type="disulfide bond" description="Alternate" evidence="1">
    <location>
        <begin position="92"/>
        <end position="186"/>
    </location>
</feature>
<evidence type="ECO:0000255" key="1">
    <source>
        <dbReference type="HAMAP-Rule" id="MF_00144"/>
    </source>
</evidence>
<keyword id="KW-0067">ATP-binding</keyword>
<keyword id="KW-0963">Cytoplasm</keyword>
<keyword id="KW-1015">Disulfide bond</keyword>
<keyword id="KW-0547">Nucleotide-binding</keyword>
<keyword id="KW-1185">Reference proteome</keyword>
<keyword id="KW-0694">RNA-binding</keyword>
<keyword id="KW-0808">Transferase</keyword>
<keyword id="KW-0819">tRNA processing</keyword>
<keyword id="KW-0820">tRNA-binding</keyword>
<protein>
    <recommendedName>
        <fullName evidence="1">tRNA-specific 2-thiouridylase MnmA</fullName>
        <ecNumber evidence="1">2.8.1.13</ecNumber>
    </recommendedName>
</protein>
<organism>
    <name type="scientific">Campylobacter lari (strain RM2100 / D67 / ATCC BAA-1060)</name>
    <dbReference type="NCBI Taxonomy" id="306263"/>
    <lineage>
        <taxon>Bacteria</taxon>
        <taxon>Pseudomonadati</taxon>
        <taxon>Campylobacterota</taxon>
        <taxon>Epsilonproteobacteria</taxon>
        <taxon>Campylobacterales</taxon>
        <taxon>Campylobacteraceae</taxon>
        <taxon>Campylobacter</taxon>
    </lineage>
</organism>